<gene>
    <name evidence="1" type="primary">hisZ</name>
    <name type="ordered locus">GSU3307</name>
</gene>
<organism>
    <name type="scientific">Geobacter sulfurreducens (strain ATCC 51573 / DSM 12127 / PCA)</name>
    <dbReference type="NCBI Taxonomy" id="243231"/>
    <lineage>
        <taxon>Bacteria</taxon>
        <taxon>Pseudomonadati</taxon>
        <taxon>Thermodesulfobacteriota</taxon>
        <taxon>Desulfuromonadia</taxon>
        <taxon>Geobacterales</taxon>
        <taxon>Geobacteraceae</taxon>
        <taxon>Geobacter</taxon>
    </lineage>
</organism>
<comment type="function">
    <text evidence="1">Required for the first step of histidine biosynthesis. May allow the feedback regulation of ATP phosphoribosyltransferase activity by histidine.</text>
</comment>
<comment type="pathway">
    <text evidence="1">Amino-acid biosynthesis; L-histidine biosynthesis; L-histidine from 5-phospho-alpha-D-ribose 1-diphosphate: step 1/9.</text>
</comment>
<comment type="subunit">
    <text evidence="1">Heteromultimer composed of HisG and HisZ subunits.</text>
</comment>
<comment type="subcellular location">
    <subcellularLocation>
        <location evidence="1">Cytoplasm</location>
    </subcellularLocation>
</comment>
<comment type="miscellaneous">
    <text>This function is generally fulfilled by the C-terminal part of HisG, which is missing in some bacteria such as this one.</text>
</comment>
<comment type="similarity">
    <text evidence="1">Belongs to the class-II aminoacyl-tRNA synthetase family. HisZ subfamily.</text>
</comment>
<feature type="chain" id="PRO_0000171035" description="ATP phosphoribosyltransferase regulatory subunit">
    <location>
        <begin position="1"/>
        <end position="438"/>
    </location>
</feature>
<keyword id="KW-0028">Amino-acid biosynthesis</keyword>
<keyword id="KW-0963">Cytoplasm</keyword>
<keyword id="KW-0368">Histidine biosynthesis</keyword>
<keyword id="KW-1185">Reference proteome</keyword>
<protein>
    <recommendedName>
        <fullName evidence="1">ATP phosphoribosyltransferase regulatory subunit</fullName>
    </recommendedName>
</protein>
<reference key="1">
    <citation type="journal article" date="2003" name="Science">
        <title>Genome of Geobacter sulfurreducens: metal reduction in subsurface environments.</title>
        <authorList>
            <person name="Methe B.A."/>
            <person name="Nelson K.E."/>
            <person name="Eisen J.A."/>
            <person name="Paulsen I.T."/>
            <person name="Nelson W.C."/>
            <person name="Heidelberg J.F."/>
            <person name="Wu D."/>
            <person name="Wu M."/>
            <person name="Ward N.L."/>
            <person name="Beanan M.J."/>
            <person name="Dodson R.J."/>
            <person name="Madupu R."/>
            <person name="Brinkac L.M."/>
            <person name="Daugherty S.C."/>
            <person name="DeBoy R.T."/>
            <person name="Durkin A.S."/>
            <person name="Gwinn M.L."/>
            <person name="Kolonay J.F."/>
            <person name="Sullivan S.A."/>
            <person name="Haft D.H."/>
            <person name="Selengut J."/>
            <person name="Davidsen T.M."/>
            <person name="Zafar N."/>
            <person name="White O."/>
            <person name="Tran B."/>
            <person name="Romero C."/>
            <person name="Forberger H.A."/>
            <person name="Weidman J.F."/>
            <person name="Khouri H.M."/>
            <person name="Feldblyum T.V."/>
            <person name="Utterback T.R."/>
            <person name="Van Aken S.E."/>
            <person name="Lovley D.R."/>
            <person name="Fraser C.M."/>
        </authorList>
    </citation>
    <scope>NUCLEOTIDE SEQUENCE [LARGE SCALE GENOMIC DNA]</scope>
    <source>
        <strain>ATCC 51573 / DSM 12127 / PCA</strain>
    </source>
</reference>
<proteinExistence type="inferred from homology"/>
<accession>P60837</accession>
<name>HISZ_GEOSL</name>
<sequence>MTPITPIEAPLPKGVTDFLPEKADKIGYIEGKIRKVFELWGFRRIITPLLEFEDVIAAGLGDDLKAKTFRFDDRQSGKLIAVPSDITPQIARIVATRLRGYPLPHRICYSGRVLRHAELQSGRSREIFQSGVELIGLDSPEADAEMVTMAVEALKGLGFRDFKIDLGHVGFIRGIMTASGLEVAVRNRLQEAIGKKDVSAVRSILAESPLSDAAKDELAALPRLFGGREVLDEAGRVATNDTSRRALDNISQVLDLLDIHGVSDHLTIDLGEVRGLDYHTGLTFEGFVTGMGEAVCSGGRYDTLTARYGFPAPATGFTFNVLALLSALEKRPDVEASKTRDILIFNQQDDRREALEIAQQLRRRGYTTARDIIRRNFDDSLDYARRMNILHMMVVGGDQCGPDEVYLVRVADGQGQRIKKAEVFSERFSLDAGPDKES</sequence>
<dbReference type="EMBL" id="AE017180">
    <property type="protein sequence ID" value="AAR36697.1"/>
    <property type="molecule type" value="Genomic_DNA"/>
</dbReference>
<dbReference type="RefSeq" id="NP_954347.1">
    <property type="nucleotide sequence ID" value="NC_002939.5"/>
</dbReference>
<dbReference type="RefSeq" id="WP_010943919.1">
    <property type="nucleotide sequence ID" value="NC_002939.5"/>
</dbReference>
<dbReference type="SMR" id="P60837"/>
<dbReference type="STRING" id="243231.GSU3307"/>
<dbReference type="EnsemblBacteria" id="AAR36697">
    <property type="protein sequence ID" value="AAR36697"/>
    <property type="gene ID" value="GSU3307"/>
</dbReference>
<dbReference type="KEGG" id="gsu:GSU3307"/>
<dbReference type="PATRIC" id="fig|243231.5.peg.3325"/>
<dbReference type="eggNOG" id="COG0124">
    <property type="taxonomic scope" value="Bacteria"/>
</dbReference>
<dbReference type="HOGENOM" id="CLU_025113_0_2_7"/>
<dbReference type="InParanoid" id="P60837"/>
<dbReference type="OrthoDB" id="9800814at2"/>
<dbReference type="UniPathway" id="UPA00031">
    <property type="reaction ID" value="UER00006"/>
</dbReference>
<dbReference type="Proteomes" id="UP000000577">
    <property type="component" value="Chromosome"/>
</dbReference>
<dbReference type="GO" id="GO:0005737">
    <property type="term" value="C:cytoplasm"/>
    <property type="evidence" value="ECO:0007669"/>
    <property type="project" value="UniProtKB-SubCell"/>
</dbReference>
<dbReference type="GO" id="GO:0140101">
    <property type="term" value="F:catalytic activity, acting on a tRNA"/>
    <property type="evidence" value="ECO:0007669"/>
    <property type="project" value="UniProtKB-ARBA"/>
</dbReference>
<dbReference type="GO" id="GO:0000105">
    <property type="term" value="P:L-histidine biosynthetic process"/>
    <property type="evidence" value="ECO:0007669"/>
    <property type="project" value="UniProtKB-UniRule"/>
</dbReference>
<dbReference type="GO" id="GO:0006418">
    <property type="term" value="P:tRNA aminoacylation for protein translation"/>
    <property type="evidence" value="ECO:0007669"/>
    <property type="project" value="UniProtKB-ARBA"/>
</dbReference>
<dbReference type="CDD" id="cd00773">
    <property type="entry name" value="HisRS-like_core"/>
    <property type="match status" value="1"/>
</dbReference>
<dbReference type="Gene3D" id="3.40.50.800">
    <property type="entry name" value="Anticodon-binding domain"/>
    <property type="match status" value="1"/>
</dbReference>
<dbReference type="Gene3D" id="3.30.930.10">
    <property type="entry name" value="Bira Bifunctional Protein, Domain 2"/>
    <property type="match status" value="1"/>
</dbReference>
<dbReference type="HAMAP" id="MF_00125">
    <property type="entry name" value="HisZ"/>
    <property type="match status" value="1"/>
</dbReference>
<dbReference type="InterPro" id="IPR006195">
    <property type="entry name" value="aa-tRNA-synth_II"/>
</dbReference>
<dbReference type="InterPro" id="IPR045864">
    <property type="entry name" value="aa-tRNA-synth_II/BPL/LPL"/>
</dbReference>
<dbReference type="InterPro" id="IPR036621">
    <property type="entry name" value="Anticodon-bd_dom_sf"/>
</dbReference>
<dbReference type="InterPro" id="IPR041715">
    <property type="entry name" value="HisRS-like_core"/>
</dbReference>
<dbReference type="InterPro" id="IPR004516">
    <property type="entry name" value="HisRS/HisZ"/>
</dbReference>
<dbReference type="InterPro" id="IPR004517">
    <property type="entry name" value="HisZ"/>
</dbReference>
<dbReference type="NCBIfam" id="TIGR00443">
    <property type="entry name" value="hisZ_biosyn_reg"/>
    <property type="match status" value="1"/>
</dbReference>
<dbReference type="NCBIfam" id="NF008942">
    <property type="entry name" value="PRK12292.2-5"/>
    <property type="match status" value="1"/>
</dbReference>
<dbReference type="PANTHER" id="PTHR11476:SF7">
    <property type="entry name" value="HISTIDINE--TRNA LIGASE"/>
    <property type="match status" value="1"/>
</dbReference>
<dbReference type="PANTHER" id="PTHR11476">
    <property type="entry name" value="HISTIDYL-TRNA SYNTHETASE"/>
    <property type="match status" value="1"/>
</dbReference>
<dbReference type="Pfam" id="PF13393">
    <property type="entry name" value="tRNA-synt_His"/>
    <property type="match status" value="1"/>
</dbReference>
<dbReference type="PIRSF" id="PIRSF001549">
    <property type="entry name" value="His-tRNA_synth"/>
    <property type="match status" value="1"/>
</dbReference>
<dbReference type="SUPFAM" id="SSF52954">
    <property type="entry name" value="Class II aaRS ABD-related"/>
    <property type="match status" value="1"/>
</dbReference>
<dbReference type="SUPFAM" id="SSF55681">
    <property type="entry name" value="Class II aaRS and biotin synthetases"/>
    <property type="match status" value="1"/>
</dbReference>
<dbReference type="PROSITE" id="PS50862">
    <property type="entry name" value="AA_TRNA_LIGASE_II"/>
    <property type="match status" value="1"/>
</dbReference>
<evidence type="ECO:0000255" key="1">
    <source>
        <dbReference type="HAMAP-Rule" id="MF_00125"/>
    </source>
</evidence>